<proteinExistence type="inferred from homology"/>
<reference key="1">
    <citation type="journal article" date="2006" name="Nature">
        <title>The DNA sequence, annotation and analysis of human chromosome 3.</title>
        <authorList>
            <person name="Muzny D.M."/>
            <person name="Scherer S.E."/>
            <person name="Kaul R."/>
            <person name="Wang J."/>
            <person name="Yu J."/>
            <person name="Sudbrak R."/>
            <person name="Buhay C.J."/>
            <person name="Chen R."/>
            <person name="Cree A."/>
            <person name="Ding Y."/>
            <person name="Dugan-Rocha S."/>
            <person name="Gill R."/>
            <person name="Gunaratne P."/>
            <person name="Harris R.A."/>
            <person name="Hawes A.C."/>
            <person name="Hernandez J."/>
            <person name="Hodgson A.V."/>
            <person name="Hume J."/>
            <person name="Jackson A."/>
            <person name="Khan Z.M."/>
            <person name="Kovar-Smith C."/>
            <person name="Lewis L.R."/>
            <person name="Lozado R.J."/>
            <person name="Metzker M.L."/>
            <person name="Milosavljevic A."/>
            <person name="Miner G.R."/>
            <person name="Morgan M.B."/>
            <person name="Nazareth L.V."/>
            <person name="Scott G."/>
            <person name="Sodergren E."/>
            <person name="Song X.-Z."/>
            <person name="Steffen D."/>
            <person name="Wei S."/>
            <person name="Wheeler D.A."/>
            <person name="Wright M.W."/>
            <person name="Worley K.C."/>
            <person name="Yuan Y."/>
            <person name="Zhang Z."/>
            <person name="Adams C.Q."/>
            <person name="Ansari-Lari M.A."/>
            <person name="Ayele M."/>
            <person name="Brown M.J."/>
            <person name="Chen G."/>
            <person name="Chen Z."/>
            <person name="Clendenning J."/>
            <person name="Clerc-Blankenburg K.P."/>
            <person name="Chen R."/>
            <person name="Chen Z."/>
            <person name="Davis C."/>
            <person name="Delgado O."/>
            <person name="Dinh H.H."/>
            <person name="Dong W."/>
            <person name="Draper H."/>
            <person name="Ernst S."/>
            <person name="Fu G."/>
            <person name="Gonzalez-Garay M.L."/>
            <person name="Garcia D.K."/>
            <person name="Gillett W."/>
            <person name="Gu J."/>
            <person name="Hao B."/>
            <person name="Haugen E."/>
            <person name="Havlak P."/>
            <person name="He X."/>
            <person name="Hennig S."/>
            <person name="Hu S."/>
            <person name="Huang W."/>
            <person name="Jackson L.R."/>
            <person name="Jacob L.S."/>
            <person name="Kelly S.H."/>
            <person name="Kube M."/>
            <person name="Levy R."/>
            <person name="Li Z."/>
            <person name="Liu B."/>
            <person name="Liu J."/>
            <person name="Liu W."/>
            <person name="Lu J."/>
            <person name="Maheshwari M."/>
            <person name="Nguyen B.-V."/>
            <person name="Okwuonu G.O."/>
            <person name="Palmeiri A."/>
            <person name="Pasternak S."/>
            <person name="Perez L.M."/>
            <person name="Phelps K.A."/>
            <person name="Plopper F.J."/>
            <person name="Qiang B."/>
            <person name="Raymond C."/>
            <person name="Rodriguez R."/>
            <person name="Saenphimmachak C."/>
            <person name="Santibanez J."/>
            <person name="Shen H."/>
            <person name="Shen Y."/>
            <person name="Subramanian S."/>
            <person name="Tabor P.E."/>
            <person name="Verduzco D."/>
            <person name="Waldron L."/>
            <person name="Wang J."/>
            <person name="Wang J."/>
            <person name="Wang Q."/>
            <person name="Williams G.A."/>
            <person name="Wong G.K.-S."/>
            <person name="Yao Z."/>
            <person name="Zhang J."/>
            <person name="Zhang X."/>
            <person name="Zhao G."/>
            <person name="Zhou J."/>
            <person name="Zhou Y."/>
            <person name="Nelson D."/>
            <person name="Lehrach H."/>
            <person name="Reinhardt R."/>
            <person name="Naylor S.L."/>
            <person name="Yang H."/>
            <person name="Olson M."/>
            <person name="Weinstock G."/>
            <person name="Gibbs R.A."/>
        </authorList>
    </citation>
    <scope>NUCLEOTIDE SEQUENCE [LARGE SCALE GENOMIC DNA]</scope>
</reference>
<comment type="similarity">
    <text evidence="2">Belongs to the FAM157 family.</text>
</comment>
<keyword id="KW-1185">Reference proteome</keyword>
<evidence type="ECO:0000256" key="1">
    <source>
        <dbReference type="SAM" id="MobiDB-lite"/>
    </source>
</evidence>
<evidence type="ECO:0000305" key="2"/>
<sequence length="383" mass="42896">MGPLFTTIPGAHSGPMRPLPKKHVEPMAVRQLLLGNSTMIRHTCPMSVPLSRQVKEVAAQKPSEDIYKNWQQQQQQQQQQQQQQLDLLFHQRIQISLWPRKQKRRKTEQHSHPFVKKAFRFSAGSGCGRPSSNKMLRSMGGGQRPTGLGSEFFRLLHDLHLLAFAMKRIWIHRRGEATARPRAPEHPAPPATAVRGRDAASQNLKRRPGSGTDGLRLQGAEPSRLLRTYAGGAVIPTGTPERAQPPPPQDPLGRRRWLSRNTWGPWPGTTQPPSPQLLRNDWGSCGFMVPEAARGKVFQDSQEGAHIRRETVSKSVCAEPWRHQRARDPAPTNFPLRCQKQRGASASSGQHEGRVNLVFFIGSPTVIAVPDLQCPTKYSGMLY</sequence>
<feature type="chain" id="PRO_0000395456" description="Putative protein FAM157A">
    <location>
        <begin position="1"/>
        <end position="383"/>
    </location>
</feature>
<feature type="region of interest" description="Disordered" evidence="1">
    <location>
        <begin position="1"/>
        <end position="21"/>
    </location>
</feature>
<feature type="region of interest" description="Disordered" evidence="1">
    <location>
        <begin position="177"/>
        <end position="254"/>
    </location>
</feature>
<name>F157A_HUMAN</name>
<gene>
    <name type="primary">FAM157A</name>
</gene>
<dbReference type="EMBL" id="AC073135">
    <property type="status" value="NOT_ANNOTATED_CDS"/>
    <property type="molecule type" value="Genomic_DNA"/>
</dbReference>
<dbReference type="RefSeq" id="NP_001138720.1">
    <property type="nucleotide sequence ID" value="NM_001145248.1"/>
</dbReference>
<dbReference type="RefSeq" id="XP_016862614.1">
    <property type="nucleotide sequence ID" value="XM_017007125.1"/>
</dbReference>
<dbReference type="BioGRID" id="608692">
    <property type="interactions" value="1"/>
</dbReference>
<dbReference type="FunCoup" id="C9JC47">
    <property type="interactions" value="1"/>
</dbReference>
<dbReference type="iPTMnet" id="C9JC47"/>
<dbReference type="PhosphoSitePlus" id="C9JC47"/>
<dbReference type="BioMuta" id="HGNC:34079"/>
<dbReference type="MassIVE" id="C9JC47"/>
<dbReference type="PeptideAtlas" id="C9JC47"/>
<dbReference type="AGR" id="HGNC:34079"/>
<dbReference type="GeneCards" id="FAM157A"/>
<dbReference type="HGNC" id="HGNC:34079">
    <property type="gene designation" value="FAM157A"/>
</dbReference>
<dbReference type="neXtProt" id="NX_C9JC47"/>
<dbReference type="PharmGKB" id="PA164719690"/>
<dbReference type="InParanoid" id="C9JC47"/>
<dbReference type="PAN-GO" id="C9JC47">
    <property type="GO annotations" value="0 GO annotations based on evolutionary models"/>
</dbReference>
<dbReference type="PhylomeDB" id="C9JC47"/>
<dbReference type="PathwayCommons" id="C9JC47"/>
<dbReference type="BioGRID-ORCS" id="728262">
    <property type="hits" value="33 hits in 224 CRISPR screens"/>
</dbReference>
<dbReference type="GenomeRNAi" id="728262"/>
<dbReference type="Pharos" id="C9JC47">
    <property type="development level" value="Tdark"/>
</dbReference>
<dbReference type="PRO" id="PR:C9JC47"/>
<dbReference type="Proteomes" id="UP000005640">
    <property type="component" value="Unplaced"/>
</dbReference>
<dbReference type="RNAct" id="C9JC47">
    <property type="molecule type" value="protein"/>
</dbReference>
<accession>C9JC47</accession>
<organism>
    <name type="scientific">Homo sapiens</name>
    <name type="common">Human</name>
    <dbReference type="NCBI Taxonomy" id="9606"/>
    <lineage>
        <taxon>Eukaryota</taxon>
        <taxon>Metazoa</taxon>
        <taxon>Chordata</taxon>
        <taxon>Craniata</taxon>
        <taxon>Vertebrata</taxon>
        <taxon>Euteleostomi</taxon>
        <taxon>Mammalia</taxon>
        <taxon>Eutheria</taxon>
        <taxon>Euarchontoglires</taxon>
        <taxon>Primates</taxon>
        <taxon>Haplorrhini</taxon>
        <taxon>Catarrhini</taxon>
        <taxon>Hominidae</taxon>
        <taxon>Homo</taxon>
    </lineage>
</organism>
<protein>
    <recommendedName>
        <fullName>Putative protein FAM157A</fullName>
    </recommendedName>
</protein>